<reference evidence="11 12" key="1">
    <citation type="journal article" date="2008" name="DNA Res.">
        <title>Determination of the genome sequence of Porphyromonas gingivalis strain ATCC 33277 and genomic comparison with strain W83 revealed extensive genome rearrangements in P. gingivalis.</title>
        <authorList>
            <person name="Naito M."/>
            <person name="Hirakawa H."/>
            <person name="Yamashita A."/>
            <person name="Ohara N."/>
            <person name="Shoji M."/>
            <person name="Yukitake H."/>
            <person name="Nakayama K."/>
            <person name="Toh H."/>
            <person name="Yoshimura F."/>
            <person name="Kuhara S."/>
            <person name="Hattori M."/>
            <person name="Hayashi T."/>
            <person name="Nakayama K."/>
        </authorList>
    </citation>
    <scope>NUCLEOTIDE SEQUENCE [LARGE SCALE GENOMIC DNA]</scope>
    <source>
        <strain evidence="12">ATCC 33277 / DSM 20709 / CIP 103683 / JCM 12257 / NCTC 11834 / 2561</strain>
    </source>
</reference>
<reference key="2">
    <citation type="journal article" date="2007" name="J. Immunol.">
        <title>Fimbrial proteins of porphyromonas gingivalis mediate in vivo virulence and exploit TLR2 and complement receptor 3 to persist in macrophages.</title>
        <authorList>
            <person name="Wang M."/>
            <person name="Shakhatreh M.A."/>
            <person name="James D."/>
            <person name="Liang S."/>
            <person name="Nishiyama S."/>
            <person name="Yoshimura F."/>
            <person name="Demuth D.R."/>
            <person name="Hajishengallis G."/>
        </authorList>
    </citation>
    <scope>FUNCTION</scope>
    <scope>SUBCELLULAR LOCATION</scope>
    <scope>SUBUNIT</scope>
    <source>
        <strain evidence="7">ATCC 33277 / DSM 20709 / CIP 103683 / JCM 12257 / NCTC 11834 / 2561</strain>
    </source>
</reference>
<reference key="3">
    <citation type="journal article" date="2007" name="Microbiology">
        <title>Involvement of minor components associated with the FimA fimbriae of Porphyromonas gingivalis in adhesive functions.</title>
        <authorList>
            <person name="Nishiyama S."/>
            <person name="Murakami Y."/>
            <person name="Nagata H."/>
            <person name="Shizukuishi S."/>
            <person name="Kawagishi I."/>
            <person name="Yoshimura F."/>
        </authorList>
    </citation>
    <scope>FUNCTION</scope>
    <scope>SUBCELLULAR LOCATION</scope>
    <scope>SUBUNIT</scope>
    <source>
        <strain evidence="6">ATCC 33277 / DSM 20709 / CIP 103683 / JCM 12257 / NCTC 11834 / 2561</strain>
    </source>
</reference>
<reference key="4">
    <citation type="journal article" date="2009" name="Infect. Immun.">
        <title>Host adhesive activities and virulence of novel fimbrial proteins of Porphyromonas gingivalis.</title>
        <authorList>
            <person name="Pierce D.L."/>
            <person name="Nishiyama S."/>
            <person name="Liang S."/>
            <person name="Wang M."/>
            <person name="Triantafilou M."/>
            <person name="Triantafilou K."/>
            <person name="Yoshimura F."/>
            <person name="Demuth D.R."/>
            <person name="Hajishengallis G."/>
        </authorList>
    </citation>
    <scope>FUNCTION</scope>
    <scope>DISRUPTION PHENOTYPE</scope>
    <scope>IDENTIFICATION IN A COMPLEX CONTAINING FIMC; FIMD AND FIME</scope>
    <scope>INTERACTION WITH HOST CXCR4</scope>
    <scope>SUBUNIT</scope>
    <scope>SUBCELLULAR LOCATION</scope>
    <source>
        <strain evidence="8">ATCC 33277 / DSM 20709 / CIP 103683 / JCM 12257 / NCTC 11834 / 2561</strain>
    </source>
</reference>
<accession>B2RH58</accession>
<name>FIMD_PORG3</name>
<dbReference type="EMBL" id="AP009380">
    <property type="protein sequence ID" value="BAG32703.1"/>
    <property type="molecule type" value="Genomic_DNA"/>
</dbReference>
<dbReference type="RefSeq" id="WP_012457310.1">
    <property type="nucleotide sequence ID" value="NC_010729.1"/>
</dbReference>
<dbReference type="SMR" id="B2RH58"/>
<dbReference type="GeneID" id="29255429"/>
<dbReference type="KEGG" id="pgn:PGN_0184"/>
<dbReference type="eggNOG" id="ENOG502Z7S7">
    <property type="taxonomic scope" value="Bacteria"/>
</dbReference>
<dbReference type="HOGENOM" id="CLU_023164_0_0_10"/>
<dbReference type="OrthoDB" id="1046951at2"/>
<dbReference type="BioCyc" id="PGIN431947:G1G2V-200-MONOMER"/>
<dbReference type="Proteomes" id="UP000008842">
    <property type="component" value="Chromosome"/>
</dbReference>
<dbReference type="GO" id="GO:0009279">
    <property type="term" value="C:cell outer membrane"/>
    <property type="evidence" value="ECO:0007669"/>
    <property type="project" value="UniProtKB-SubCell"/>
</dbReference>
<dbReference type="GO" id="GO:0009289">
    <property type="term" value="C:pilus"/>
    <property type="evidence" value="ECO:0000314"/>
    <property type="project" value="UniProtKB"/>
</dbReference>
<dbReference type="GO" id="GO:0046810">
    <property type="term" value="F:host cell extracellular matrix binding"/>
    <property type="evidence" value="ECO:0000314"/>
    <property type="project" value="UniProtKB"/>
</dbReference>
<dbReference type="GO" id="GO:0098609">
    <property type="term" value="P:cell-cell adhesion"/>
    <property type="evidence" value="ECO:0000315"/>
    <property type="project" value="UniProtKB"/>
</dbReference>
<dbReference type="Gene3D" id="2.60.40.3690">
    <property type="match status" value="1"/>
</dbReference>
<dbReference type="PROSITE" id="PS51257">
    <property type="entry name" value="PROKAR_LIPOPROTEIN"/>
    <property type="match status" value="1"/>
</dbReference>
<keyword id="KW-0998">Cell outer membrane</keyword>
<keyword id="KW-0281">Fimbrium</keyword>
<keyword id="KW-0449">Lipoprotein</keyword>
<keyword id="KW-0472">Membrane</keyword>
<keyword id="KW-0564">Palmitate</keyword>
<keyword id="KW-0732">Signal</keyword>
<keyword id="KW-0843">Virulence</keyword>
<gene>
    <name evidence="11" type="primary">fimD</name>
    <name evidence="11" type="ordered locus">PGN_0184</name>
</gene>
<comment type="function">
    <text evidence="3 4 5 9">Probably a component of the fimbrium tip (PubMed:17526848, PubMed:19506009). These long, filamentous pili are attached to the cell surface; they mediate biofilm formation, adhesion onto host cells and onto other bacteria that are part of the oral microbiome (PubMed:17526848). They play an important role in invasion of periodontal tissues and are major virulence factors. FimC, FimD and FimE contribute to interaction with host CXCR4 and thereby down-regulate the TLR2-mediated host immune response (PubMed:17675496, PubMed:19506009).</text>
</comment>
<comment type="subunit">
    <text evidence="3 5">Fimbriae are composed of a major, structural subunit and the minor components FimC, FimD and FimE (PubMed:17526848, PubMed:19506009). Identified in a complex composed of FimC, FimD and FimE (in vitro) (PubMed:19506009). The complex interacts with host extracellular matrix proteins, including fibronectin and type I collagen (PubMed:17526848, PubMed:19506009). Interacts with host CXCR4 (PubMed:19506009).</text>
</comment>
<comment type="subcellular location">
    <subcellularLocation>
        <location evidence="3">Fimbrium</location>
    </subcellularLocation>
    <subcellularLocation>
        <location evidence="9">Cell outer membrane</location>
    </subcellularLocation>
    <text evidence="9 10">Probably synthesized as a palmitoylated precursor. Efficient export to the outer membrane and integration into fimbriae requires lipidation and subsequent proteolytic removal of the lipidated propeptide (Probable). Probably part of the fimbrium tip, as a part of the complex formed by FimC, FimD and FimE.</text>
</comment>
<comment type="disruption phenotype">
    <text evidence="5">Triple mutants lacking FimC, FimD and FimE show strongly decreased interaction with host CXCR4 and impaired down-regulation of the TLR2-mediated innate immune response, resulting in strongly reduced survival of the bacteria.</text>
</comment>
<comment type="miscellaneous">
    <text evidence="9">The name (major fimbrium subunit) does not indicate the abundance of the protein, but is derived from the greater length of the major fimbriae. In strain ATCC 33277 and strain ATCC BAA-1703 / FDC 381, major fimbriae are 300 - 1600 nM in length and about 5 nm in diameter. In contrast, minor fimbriae are only about 80 - 120 nm long. This length difference is observed only in a small number of strains, including strain ATCC 33277 and strain ATCC BAA-1703 / FDC 381, and is due to a loss of function mutation in FimB, a protein that restricts fimbrial length in other strains.</text>
</comment>
<comment type="similarity">
    <text evidence="9">Belongs to the FimD family.</text>
</comment>
<comment type="online information" name="Protein Spotlight">
    <link uri="https://www.proteinspotlight.org/back_issues/182/"/>
    <text>A loosening of habits - Issue 182 of August 2016</text>
</comment>
<organism>
    <name type="scientific">Porphyromonas gingivalis (strain ATCC 33277 / DSM 20709 / CIP 103683 / JCM 12257 / NCTC 11834 / 2561)</name>
    <dbReference type="NCBI Taxonomy" id="431947"/>
    <lineage>
        <taxon>Bacteria</taxon>
        <taxon>Pseudomonadati</taxon>
        <taxon>Bacteroidota</taxon>
        <taxon>Bacteroidia</taxon>
        <taxon>Bacteroidales</taxon>
        <taxon>Porphyromonadaceae</taxon>
        <taxon>Porphyromonas</taxon>
    </lineage>
</organism>
<sequence length="670" mass="75848">MRTNRILNIICPPILFLLVGFLFGCVREDIESDMNETSSLFLQVQPYNQRSEEGGVAAYDENTIERLTLVFYKNGTKVWQAEPVETSPSSNSYYVPVPESMYGQFNGNNSFKIYLVANVNFSGSFEPNASETSFLKTLVPNSILLQNDGKPEDKFAMIGSVEKQINMATSEGKQLGSIELKRVAAKLRLKKPVLNISDYELVGDPKAKFRNCMPKGFLSVEEKPEGVGYEAIDYRPMTEANSSVHFYSYYNEWALNNEGRPEFVMMLKLKKTGTDDNTAKPYYYRIPVDGSDKKIRSNHLYDMAVTIEVLGSLNEEDPVTINGSLSVIEWTSHSDDQTLPDVQYLEVIPQETVMNMTTEIELDYFSSHSLLPPADVKATCTYVNSNGQQITDTYTGANVPTVTIDANTKKIKVRSILPINNIPKDISFTIKNSIGFEKKIKIRQNPSQFIINTFGTKSSWQPEGNLAPNLNNKAIYQIVVLSPPADGNMIIGFPPTKEVGFYKKSGSSYTLKHTDRITEQDEQTANMVSPSFELASQLGATLVQDHWEYYTLNPLRLIYHSNQQNRYALMTCAFYWEERKKADGTIERLDDWRLPTRAEIQLVDKLQREQAGVVRDIMTGRYYWSGLPDKAIKILLPTASGNATEQRAHVRCVRDVKNDRFVKSAKRLKK</sequence>
<feature type="signal peptide" evidence="2">
    <location>
        <begin position="1"/>
        <end position="24"/>
    </location>
</feature>
<feature type="propeptide" id="PRO_0000436739" evidence="1">
    <location>
        <begin position="25"/>
        <end position="50"/>
    </location>
</feature>
<feature type="chain" id="PRO_0000436740" description="Major fimbrium tip subunit FimD">
    <location>
        <begin position="51"/>
        <end position="670"/>
    </location>
</feature>
<feature type="lipid moiety-binding region" description="N-palmitoyl cysteine" evidence="2">
    <location>
        <position position="25"/>
    </location>
</feature>
<feature type="lipid moiety-binding region" description="S-diacylglycerol cysteine" evidence="2">
    <location>
        <position position="25"/>
    </location>
</feature>
<evidence type="ECO:0000255" key="1"/>
<evidence type="ECO:0000255" key="2">
    <source>
        <dbReference type="PROSITE-ProRule" id="PRU00303"/>
    </source>
</evidence>
<evidence type="ECO:0000269" key="3">
    <source>
    </source>
</evidence>
<evidence type="ECO:0000269" key="4">
    <source>
    </source>
</evidence>
<evidence type="ECO:0000269" key="5">
    <source>
    </source>
</evidence>
<evidence type="ECO:0000303" key="6">
    <source>
    </source>
</evidence>
<evidence type="ECO:0000303" key="7">
    <source>
    </source>
</evidence>
<evidence type="ECO:0000303" key="8">
    <source>
    </source>
</evidence>
<evidence type="ECO:0000305" key="9"/>
<evidence type="ECO:0000305" key="10">
    <source>
    </source>
</evidence>
<evidence type="ECO:0000312" key="11">
    <source>
        <dbReference type="EMBL" id="BAG32703.1"/>
    </source>
</evidence>
<evidence type="ECO:0000312" key="12">
    <source>
        <dbReference type="Proteomes" id="UP000008842"/>
    </source>
</evidence>
<protein>
    <recommendedName>
        <fullName>Major fimbrium tip subunit FimD</fullName>
    </recommendedName>
</protein>
<proteinExistence type="evidence at protein level"/>